<reference key="1">
    <citation type="journal article" date="2000" name="Nature">
        <title>Sequence and analysis of chromosome 3 of the plant Arabidopsis thaliana.</title>
        <authorList>
            <person name="Salanoubat M."/>
            <person name="Lemcke K."/>
            <person name="Rieger M."/>
            <person name="Ansorge W."/>
            <person name="Unseld M."/>
            <person name="Fartmann B."/>
            <person name="Valle G."/>
            <person name="Bloecker H."/>
            <person name="Perez-Alonso M."/>
            <person name="Obermaier B."/>
            <person name="Delseny M."/>
            <person name="Boutry M."/>
            <person name="Grivell L.A."/>
            <person name="Mache R."/>
            <person name="Puigdomenech P."/>
            <person name="De Simone V."/>
            <person name="Choisne N."/>
            <person name="Artiguenave F."/>
            <person name="Robert C."/>
            <person name="Brottier P."/>
            <person name="Wincker P."/>
            <person name="Cattolico L."/>
            <person name="Weissenbach J."/>
            <person name="Saurin W."/>
            <person name="Quetier F."/>
            <person name="Schaefer M."/>
            <person name="Mueller-Auer S."/>
            <person name="Gabel C."/>
            <person name="Fuchs M."/>
            <person name="Benes V."/>
            <person name="Wurmbach E."/>
            <person name="Drzonek H."/>
            <person name="Erfle H."/>
            <person name="Jordan N."/>
            <person name="Bangert S."/>
            <person name="Wiedelmann R."/>
            <person name="Kranz H."/>
            <person name="Voss H."/>
            <person name="Holland R."/>
            <person name="Brandt P."/>
            <person name="Nyakatura G."/>
            <person name="Vezzi A."/>
            <person name="D'Angelo M."/>
            <person name="Pallavicini A."/>
            <person name="Toppo S."/>
            <person name="Simionati B."/>
            <person name="Conrad A."/>
            <person name="Hornischer K."/>
            <person name="Kauer G."/>
            <person name="Loehnert T.-H."/>
            <person name="Nordsiek G."/>
            <person name="Reichelt J."/>
            <person name="Scharfe M."/>
            <person name="Schoen O."/>
            <person name="Bargues M."/>
            <person name="Terol J."/>
            <person name="Climent J."/>
            <person name="Navarro P."/>
            <person name="Collado C."/>
            <person name="Perez-Perez A."/>
            <person name="Ottenwaelder B."/>
            <person name="Duchemin D."/>
            <person name="Cooke R."/>
            <person name="Laudie M."/>
            <person name="Berger-Llauro C."/>
            <person name="Purnelle B."/>
            <person name="Masuy D."/>
            <person name="de Haan M."/>
            <person name="Maarse A.C."/>
            <person name="Alcaraz J.-P."/>
            <person name="Cottet A."/>
            <person name="Casacuberta E."/>
            <person name="Monfort A."/>
            <person name="Argiriou A."/>
            <person name="Flores M."/>
            <person name="Liguori R."/>
            <person name="Vitale D."/>
            <person name="Mannhaupt G."/>
            <person name="Haase D."/>
            <person name="Schoof H."/>
            <person name="Rudd S."/>
            <person name="Zaccaria P."/>
            <person name="Mewes H.-W."/>
            <person name="Mayer K.F.X."/>
            <person name="Kaul S."/>
            <person name="Town C.D."/>
            <person name="Koo H.L."/>
            <person name="Tallon L.J."/>
            <person name="Jenkins J."/>
            <person name="Rooney T."/>
            <person name="Rizzo M."/>
            <person name="Walts A."/>
            <person name="Utterback T."/>
            <person name="Fujii C.Y."/>
            <person name="Shea T.P."/>
            <person name="Creasy T.H."/>
            <person name="Haas B."/>
            <person name="Maiti R."/>
            <person name="Wu D."/>
            <person name="Peterson J."/>
            <person name="Van Aken S."/>
            <person name="Pai G."/>
            <person name="Militscher J."/>
            <person name="Sellers P."/>
            <person name="Gill J.E."/>
            <person name="Feldblyum T.V."/>
            <person name="Preuss D."/>
            <person name="Lin X."/>
            <person name="Nierman W.C."/>
            <person name="Salzberg S.L."/>
            <person name="White O."/>
            <person name="Venter J.C."/>
            <person name="Fraser C.M."/>
            <person name="Kaneko T."/>
            <person name="Nakamura Y."/>
            <person name="Sato S."/>
            <person name="Kato T."/>
            <person name="Asamizu E."/>
            <person name="Sasamoto S."/>
            <person name="Kimura T."/>
            <person name="Idesawa K."/>
            <person name="Kawashima K."/>
            <person name="Kishida Y."/>
            <person name="Kiyokawa C."/>
            <person name="Kohara M."/>
            <person name="Matsumoto M."/>
            <person name="Matsuno A."/>
            <person name="Muraki A."/>
            <person name="Nakayama S."/>
            <person name="Nakazaki N."/>
            <person name="Shinpo S."/>
            <person name="Takeuchi C."/>
            <person name="Wada T."/>
            <person name="Watanabe A."/>
            <person name="Yamada M."/>
            <person name="Yasuda M."/>
            <person name="Tabata S."/>
        </authorList>
    </citation>
    <scope>NUCLEOTIDE SEQUENCE [LARGE SCALE GENOMIC DNA]</scope>
    <source>
        <strain>cv. Columbia</strain>
    </source>
</reference>
<reference key="2">
    <citation type="journal article" date="2017" name="Plant J.">
        <title>Araport11: a complete reannotation of the Arabidopsis thaliana reference genome.</title>
        <authorList>
            <person name="Cheng C.Y."/>
            <person name="Krishnakumar V."/>
            <person name="Chan A.P."/>
            <person name="Thibaud-Nissen F."/>
            <person name="Schobel S."/>
            <person name="Town C.D."/>
        </authorList>
    </citation>
    <scope>GENOME REANNOTATION</scope>
    <source>
        <strain>cv. Columbia</strain>
    </source>
</reference>
<reference key="3">
    <citation type="journal article" date="2003" name="Science">
        <title>Empirical analysis of transcriptional activity in the Arabidopsis genome.</title>
        <authorList>
            <person name="Yamada K."/>
            <person name="Lim J."/>
            <person name="Dale J.M."/>
            <person name="Chen H."/>
            <person name="Shinn P."/>
            <person name="Palm C.J."/>
            <person name="Southwick A.M."/>
            <person name="Wu H.C."/>
            <person name="Kim C.J."/>
            <person name="Nguyen M."/>
            <person name="Pham P.K."/>
            <person name="Cheuk R.F."/>
            <person name="Karlin-Newmann G."/>
            <person name="Liu S.X."/>
            <person name="Lam B."/>
            <person name="Sakano H."/>
            <person name="Wu T."/>
            <person name="Yu G."/>
            <person name="Miranda M."/>
            <person name="Quach H.L."/>
            <person name="Tripp M."/>
            <person name="Chang C.H."/>
            <person name="Lee J.M."/>
            <person name="Toriumi M.J."/>
            <person name="Chan M.M."/>
            <person name="Tang C.C."/>
            <person name="Onodera C.S."/>
            <person name="Deng J.M."/>
            <person name="Akiyama K."/>
            <person name="Ansari Y."/>
            <person name="Arakawa T."/>
            <person name="Banh J."/>
            <person name="Banno F."/>
            <person name="Bowser L."/>
            <person name="Brooks S.Y."/>
            <person name="Carninci P."/>
            <person name="Chao Q."/>
            <person name="Choy N."/>
            <person name="Enju A."/>
            <person name="Goldsmith A.D."/>
            <person name="Gurjal M."/>
            <person name="Hansen N.F."/>
            <person name="Hayashizaki Y."/>
            <person name="Johnson-Hopson C."/>
            <person name="Hsuan V.W."/>
            <person name="Iida K."/>
            <person name="Karnes M."/>
            <person name="Khan S."/>
            <person name="Koesema E."/>
            <person name="Ishida J."/>
            <person name="Jiang P.X."/>
            <person name="Jones T."/>
            <person name="Kawai J."/>
            <person name="Kamiya A."/>
            <person name="Meyers C."/>
            <person name="Nakajima M."/>
            <person name="Narusaka M."/>
            <person name="Seki M."/>
            <person name="Sakurai T."/>
            <person name="Satou M."/>
            <person name="Tamse R."/>
            <person name="Vaysberg M."/>
            <person name="Wallender E.K."/>
            <person name="Wong C."/>
            <person name="Yamamura Y."/>
            <person name="Yuan S."/>
            <person name="Shinozaki K."/>
            <person name="Davis R.W."/>
            <person name="Theologis A."/>
            <person name="Ecker J.R."/>
        </authorList>
    </citation>
    <scope>NUCLEOTIDE SEQUENCE [LARGE SCALE MRNA]</scope>
    <source>
        <strain>cv. Columbia</strain>
    </source>
</reference>
<reference key="4">
    <citation type="submission" date="2002-03" db="EMBL/GenBank/DDBJ databases">
        <title>Full-length cDNA from Arabidopsis thaliana.</title>
        <authorList>
            <person name="Brover V.V."/>
            <person name="Troukhan M.E."/>
            <person name="Alexandrov N.A."/>
            <person name="Lu Y.-P."/>
            <person name="Flavell R.B."/>
            <person name="Feldmann K.A."/>
        </authorList>
    </citation>
    <scope>NUCLEOTIDE SEQUENCE [LARGE SCALE MRNA]</scope>
</reference>
<reference key="5">
    <citation type="journal article" date="2001" name="Cell Stress Chaperones">
        <title>Arabidopsis thaliana type I and II chaperonins.</title>
        <authorList>
            <person name="Hill J.E."/>
            <person name="Hemmingsen S.M."/>
        </authorList>
    </citation>
    <scope>GENE FAMILY</scope>
    <scope>NOMENCLATURE</scope>
    <scope>SUBUNIT</scope>
</reference>
<dbReference type="EMBL" id="AC021640">
    <property type="protein sequence ID" value="AAF32460.1"/>
    <property type="molecule type" value="Genomic_DNA"/>
</dbReference>
<dbReference type="EMBL" id="CP002686">
    <property type="protein sequence ID" value="AEE73823.1"/>
    <property type="molecule type" value="Genomic_DNA"/>
</dbReference>
<dbReference type="EMBL" id="AY062729">
    <property type="protein sequence ID" value="AAL32807.1"/>
    <property type="molecule type" value="mRNA"/>
</dbReference>
<dbReference type="EMBL" id="AY114652">
    <property type="protein sequence ID" value="AAM47971.1"/>
    <property type="molecule type" value="mRNA"/>
</dbReference>
<dbReference type="EMBL" id="BT001156">
    <property type="protein sequence ID" value="AAN65043.1"/>
    <property type="molecule type" value="mRNA"/>
</dbReference>
<dbReference type="EMBL" id="AF387003">
    <property type="protein sequence ID" value="AAK62448.1"/>
    <property type="molecule type" value="mRNA"/>
</dbReference>
<dbReference type="EMBL" id="AY084739">
    <property type="protein sequence ID" value="AAM61312.1"/>
    <property type="molecule type" value="mRNA"/>
</dbReference>
<dbReference type="RefSeq" id="NP_186902.1">
    <property type="nucleotide sequence ID" value="NM_111120.3"/>
</dbReference>
<dbReference type="SMR" id="Q9M888"/>
<dbReference type="FunCoup" id="Q9M888">
    <property type="interactions" value="4865"/>
</dbReference>
<dbReference type="IntAct" id="Q9M888">
    <property type="interactions" value="3"/>
</dbReference>
<dbReference type="STRING" id="3702.Q9M888"/>
<dbReference type="MetOSite" id="Q9M888"/>
<dbReference type="PaxDb" id="3702-AT3G02530.1"/>
<dbReference type="ProteomicsDB" id="234382"/>
<dbReference type="EnsemblPlants" id="AT3G02530.1">
    <property type="protein sequence ID" value="AT3G02530.1"/>
    <property type="gene ID" value="AT3G02530"/>
</dbReference>
<dbReference type="GeneID" id="821160"/>
<dbReference type="Gramene" id="AT3G02530.1">
    <property type="protein sequence ID" value="AT3G02530.1"/>
    <property type="gene ID" value="AT3G02530"/>
</dbReference>
<dbReference type="KEGG" id="ath:AT3G02530"/>
<dbReference type="Araport" id="AT3G02530"/>
<dbReference type="TAIR" id="AT3G02530"/>
<dbReference type="eggNOG" id="KOG0359">
    <property type="taxonomic scope" value="Eukaryota"/>
</dbReference>
<dbReference type="HOGENOM" id="CLU_008891_3_1_1"/>
<dbReference type="InParanoid" id="Q9M888"/>
<dbReference type="OMA" id="LHPRIMT"/>
<dbReference type="OrthoDB" id="2012451at2759"/>
<dbReference type="PhylomeDB" id="Q9M888"/>
<dbReference type="BRENDA" id="3.6.4.B10">
    <property type="organism ID" value="399"/>
</dbReference>
<dbReference type="CD-CODE" id="4299E36E">
    <property type="entry name" value="Nucleolus"/>
</dbReference>
<dbReference type="PRO" id="PR:Q9M888"/>
<dbReference type="Proteomes" id="UP000006548">
    <property type="component" value="Chromosome 3"/>
</dbReference>
<dbReference type="ExpressionAtlas" id="Q9M888">
    <property type="expression patterns" value="baseline and differential"/>
</dbReference>
<dbReference type="GO" id="GO:0005737">
    <property type="term" value="C:cytoplasm"/>
    <property type="evidence" value="ECO:0007005"/>
    <property type="project" value="TAIR"/>
</dbReference>
<dbReference type="GO" id="GO:0005829">
    <property type="term" value="C:cytosol"/>
    <property type="evidence" value="ECO:0007005"/>
    <property type="project" value="TAIR"/>
</dbReference>
<dbReference type="GO" id="GO:0005524">
    <property type="term" value="F:ATP binding"/>
    <property type="evidence" value="ECO:0007669"/>
    <property type="project" value="UniProtKB-KW"/>
</dbReference>
<dbReference type="GO" id="GO:0016887">
    <property type="term" value="F:ATP hydrolysis activity"/>
    <property type="evidence" value="ECO:0007669"/>
    <property type="project" value="InterPro"/>
</dbReference>
<dbReference type="GO" id="GO:0140662">
    <property type="term" value="F:ATP-dependent protein folding chaperone"/>
    <property type="evidence" value="ECO:0007669"/>
    <property type="project" value="InterPro"/>
</dbReference>
<dbReference type="GO" id="GO:0051082">
    <property type="term" value="F:unfolded protein binding"/>
    <property type="evidence" value="ECO:0007669"/>
    <property type="project" value="InterPro"/>
</dbReference>
<dbReference type="GO" id="GO:0010043">
    <property type="term" value="P:response to zinc ion"/>
    <property type="evidence" value="ECO:0000270"/>
    <property type="project" value="TAIR"/>
</dbReference>
<dbReference type="CDD" id="cd03342">
    <property type="entry name" value="TCP1_zeta"/>
    <property type="match status" value="1"/>
</dbReference>
<dbReference type="FunFam" id="1.10.560.10:FF:000038">
    <property type="entry name" value="Chaperonin containing TCP1 subunit 6B"/>
    <property type="match status" value="1"/>
</dbReference>
<dbReference type="FunFam" id="1.10.560.10:FF:000058">
    <property type="entry name" value="T-complex protein 1 subunit zeta"/>
    <property type="match status" value="1"/>
</dbReference>
<dbReference type="FunFam" id="3.30.260.10:FF:000017">
    <property type="entry name" value="T-complex protein 1 subunit zeta"/>
    <property type="match status" value="1"/>
</dbReference>
<dbReference type="FunFam" id="3.50.7.10:FF:000004">
    <property type="entry name" value="T-complex protein 1 subunit zeta"/>
    <property type="match status" value="1"/>
</dbReference>
<dbReference type="Gene3D" id="3.50.7.10">
    <property type="entry name" value="GroEL"/>
    <property type="match status" value="1"/>
</dbReference>
<dbReference type="Gene3D" id="1.10.560.10">
    <property type="entry name" value="GroEL-like equatorial domain"/>
    <property type="match status" value="1"/>
</dbReference>
<dbReference type="Gene3D" id="3.30.260.10">
    <property type="entry name" value="TCP-1-like chaperonin intermediate domain"/>
    <property type="match status" value="1"/>
</dbReference>
<dbReference type="InterPro" id="IPR012722">
    <property type="entry name" value="Chap_CCT_zeta"/>
</dbReference>
<dbReference type="InterPro" id="IPR017998">
    <property type="entry name" value="Chaperone_TCP-1"/>
</dbReference>
<dbReference type="InterPro" id="IPR002194">
    <property type="entry name" value="Chaperonin_TCP-1_CS"/>
</dbReference>
<dbReference type="InterPro" id="IPR002423">
    <property type="entry name" value="Cpn60/GroEL/TCP-1"/>
</dbReference>
<dbReference type="InterPro" id="IPR027409">
    <property type="entry name" value="GroEL-like_apical_dom_sf"/>
</dbReference>
<dbReference type="InterPro" id="IPR027413">
    <property type="entry name" value="GROEL-like_equatorial_sf"/>
</dbReference>
<dbReference type="InterPro" id="IPR027410">
    <property type="entry name" value="TCP-1-like_intermed_sf"/>
</dbReference>
<dbReference type="InterPro" id="IPR053374">
    <property type="entry name" value="TCP-1_chaperonin"/>
</dbReference>
<dbReference type="NCBIfam" id="TIGR02347">
    <property type="entry name" value="chap_CCT_zeta"/>
    <property type="match status" value="1"/>
</dbReference>
<dbReference type="NCBIfam" id="NF041083">
    <property type="entry name" value="thermosome_beta"/>
    <property type="match status" value="1"/>
</dbReference>
<dbReference type="PANTHER" id="PTHR11353">
    <property type="entry name" value="CHAPERONIN"/>
    <property type="match status" value="1"/>
</dbReference>
<dbReference type="Pfam" id="PF00118">
    <property type="entry name" value="Cpn60_TCP1"/>
    <property type="match status" value="1"/>
</dbReference>
<dbReference type="PRINTS" id="PR00304">
    <property type="entry name" value="TCOMPLEXTCP1"/>
</dbReference>
<dbReference type="SUPFAM" id="SSF52029">
    <property type="entry name" value="GroEL apical domain-like"/>
    <property type="match status" value="1"/>
</dbReference>
<dbReference type="SUPFAM" id="SSF48592">
    <property type="entry name" value="GroEL equatorial domain-like"/>
    <property type="match status" value="1"/>
</dbReference>
<dbReference type="SUPFAM" id="SSF54849">
    <property type="entry name" value="GroEL-intermediate domain like"/>
    <property type="match status" value="1"/>
</dbReference>
<dbReference type="PROSITE" id="PS00750">
    <property type="entry name" value="TCP1_1"/>
    <property type="match status" value="1"/>
</dbReference>
<dbReference type="PROSITE" id="PS00751">
    <property type="entry name" value="TCP1_2"/>
    <property type="match status" value="1"/>
</dbReference>
<proteinExistence type="evidence at protein level"/>
<name>TCPZA_ARATH</name>
<evidence type="ECO:0000255" key="1">
    <source>
        <dbReference type="RuleBase" id="RU004187"/>
    </source>
</evidence>
<evidence type="ECO:0000303" key="2">
    <source>
    </source>
</evidence>
<evidence type="ECO:0000305" key="3"/>
<evidence type="ECO:0000305" key="4">
    <source>
    </source>
</evidence>
<evidence type="ECO:0000312" key="5">
    <source>
        <dbReference type="Araport" id="AT3G02530"/>
    </source>
</evidence>
<evidence type="ECO:0000312" key="6">
    <source>
        <dbReference type="EMBL" id="AAF32460.1"/>
    </source>
</evidence>
<evidence type="ECO:0000312" key="7">
    <source>
        <dbReference type="Proteomes" id="UP000006548"/>
    </source>
</evidence>
<accession>Q9M888</accession>
<accession>Q8LFN3</accession>
<accession>Q94EZ9</accession>
<keyword id="KW-0067">ATP-binding</keyword>
<keyword id="KW-0143">Chaperone</keyword>
<keyword id="KW-0963">Cytoplasm</keyword>
<keyword id="KW-0547">Nucleotide-binding</keyword>
<keyword id="KW-1185">Reference proteome</keyword>
<comment type="function">
    <text evidence="3">Molecular chaperone; assists the folding of proteins upon ATP hydrolysis. Known to play a role, in vitro, in the folding of actin and tubulin.</text>
</comment>
<comment type="subunit">
    <text evidence="4">Heterooligomeric complex of about 850 to 900 kDa that forms two stacked rings, 12 to 16 nm in diameter.</text>
</comment>
<comment type="subcellular location">
    <subcellularLocation>
        <location evidence="3">Cytoplasm</location>
    </subcellularLocation>
</comment>
<comment type="similarity">
    <text evidence="1">Belongs to the TCP-1 chaperonin family.</text>
</comment>
<sequence>MSVRVLNPNAEVLNKSAALHMTINAAKGLQDVLKSNLGPKGTIKMLVGGSGDIKLTKDGNTLLKEMQIQNPTAIMIARTAVAQDDISGDGTTSTVIFIGELMKQSERCIDEGMHPRVLVDGFEIAKRATLQFLDTFKTPVVMGDEPDKEILKMVARTTLRTKLYEGLADQLTDIVVNSVLCIRKPQEPIDLFMVEIMHMRHKFDVDTRLVEGLVLDHGSRHPDMKRRAENCHILTCNVSLEYEKSEINAGFFYSNAEQREAMVTAERRSVDERVQKIIELKNKVCAGNDNSFVILNQKGIDPPSLDLLAREGIIALRRAKRRNMERLVLACGGEAVNSVDDLTPDCLGWAGLVYEHVLGEEKYTFVEQVKNPHSCTILIKGPNDHTIAQIKDAVRDGLRSVKNTLEDECVVLGAGAFEVAARQHLINEVKKTVQGRAQLGVEAFANALLVVPKTLAENAGLDTQDVIISLTSEHDKGNIVGLDLQDGEPVDPQLAGIFDNYSVKRQLINSGPVIASQLLLVDEVIRAGRNMRKPT</sequence>
<feature type="chain" id="PRO_0000431662" description="T-complex protein 1 subunit zeta 1">
    <location>
        <begin position="1"/>
        <end position="535"/>
    </location>
</feature>
<feature type="sequence conflict" description="In Ref. 3; AAK62448." evidence="3" ref="3">
    <original>A</original>
    <variation>T</variation>
    <location>
        <position position="17"/>
    </location>
</feature>
<gene>
    <name evidence="3" type="primary">CCT6A</name>
    <name evidence="5" type="ordered locus">At3g02530</name>
    <name evidence="6" type="ORF">F16B3.16</name>
</gene>
<protein>
    <recommendedName>
        <fullName evidence="2">T-complex protein 1 subunit zeta 1</fullName>
        <shortName evidence="2">TCP-1-zeta 1</shortName>
    </recommendedName>
    <alternativeName>
        <fullName evidence="2">CCT-zeta 1</fullName>
    </alternativeName>
    <alternativeName>
        <fullName evidence="3">Chaperonin CCT6A</fullName>
    </alternativeName>
</protein>
<organism evidence="7">
    <name type="scientific">Arabidopsis thaliana</name>
    <name type="common">Mouse-ear cress</name>
    <dbReference type="NCBI Taxonomy" id="3702"/>
    <lineage>
        <taxon>Eukaryota</taxon>
        <taxon>Viridiplantae</taxon>
        <taxon>Streptophyta</taxon>
        <taxon>Embryophyta</taxon>
        <taxon>Tracheophyta</taxon>
        <taxon>Spermatophyta</taxon>
        <taxon>Magnoliopsida</taxon>
        <taxon>eudicotyledons</taxon>
        <taxon>Gunneridae</taxon>
        <taxon>Pentapetalae</taxon>
        <taxon>rosids</taxon>
        <taxon>malvids</taxon>
        <taxon>Brassicales</taxon>
        <taxon>Brassicaceae</taxon>
        <taxon>Camelineae</taxon>
        <taxon>Arabidopsis</taxon>
    </lineage>
</organism>